<protein>
    <recommendedName>
        <fullName>Fibulin-5</fullName>
        <shortName>FIBL-5</shortName>
    </recommendedName>
    <alternativeName>
        <fullName>Developmental arteries and neural crest EGF-like protein</fullName>
        <shortName>Dance</shortName>
    </alternativeName>
    <alternativeName>
        <fullName>Embryonic vascular EGF repeat-containing protein</fullName>
        <shortName>EVEC</shortName>
    </alternativeName>
</protein>
<accession>Q9WVH8</accession>
<accession>Q9R284</accession>
<gene>
    <name type="primary">Fbln5</name>
    <name type="synonym">Dance</name>
</gene>
<dbReference type="EMBL" id="AF112153">
    <property type="protein sequence ID" value="AAD41769.1"/>
    <property type="molecule type" value="mRNA"/>
</dbReference>
<dbReference type="EMBL" id="AF137350">
    <property type="protein sequence ID" value="AAD25101.1"/>
    <property type="molecule type" value="mRNA"/>
</dbReference>
<dbReference type="EMBL" id="BC078845">
    <property type="protein sequence ID" value="AAH78845.1"/>
    <property type="molecule type" value="mRNA"/>
</dbReference>
<dbReference type="RefSeq" id="NP_062026.2">
    <property type="nucleotide sequence ID" value="NM_019153.3"/>
</dbReference>
<dbReference type="BioGRID" id="247841">
    <property type="interactions" value="3"/>
</dbReference>
<dbReference type="FunCoup" id="Q9WVH8">
    <property type="interactions" value="379"/>
</dbReference>
<dbReference type="IntAct" id="Q9WVH8">
    <property type="interactions" value="1"/>
</dbReference>
<dbReference type="STRING" id="10116.ENSRNOP00000007004"/>
<dbReference type="GlyCosmos" id="Q9WVH8">
    <property type="glycosylation" value="2 sites, No reported glycans"/>
</dbReference>
<dbReference type="GlyGen" id="Q9WVH8">
    <property type="glycosylation" value="2 sites"/>
</dbReference>
<dbReference type="PhosphoSitePlus" id="Q9WVH8"/>
<dbReference type="PaxDb" id="10116-ENSRNOP00000007004"/>
<dbReference type="GeneID" id="29158"/>
<dbReference type="KEGG" id="rno:29158"/>
<dbReference type="UCSC" id="RGD:2594">
    <property type="organism name" value="rat"/>
</dbReference>
<dbReference type="AGR" id="RGD:2594"/>
<dbReference type="CTD" id="10516"/>
<dbReference type="RGD" id="2594">
    <property type="gene designation" value="Fbln5"/>
</dbReference>
<dbReference type="VEuPathDB" id="HostDB:ENSRNOG00000050539"/>
<dbReference type="eggNOG" id="KOG1217">
    <property type="taxonomic scope" value="Eukaryota"/>
</dbReference>
<dbReference type="HOGENOM" id="CLU_004826_0_1_1"/>
<dbReference type="InParanoid" id="Q9WVH8"/>
<dbReference type="Reactome" id="R-RNO-1566948">
    <property type="pathway name" value="Elastic fibre formation"/>
</dbReference>
<dbReference type="Reactome" id="R-RNO-2129379">
    <property type="pathway name" value="Molecules associated with elastic fibres"/>
</dbReference>
<dbReference type="PRO" id="PR:Q9WVH8"/>
<dbReference type="Proteomes" id="UP000002494">
    <property type="component" value="Chromosome 6"/>
</dbReference>
<dbReference type="Bgee" id="ENSRNOG00000050539">
    <property type="expression patterns" value="Expressed in spleen and 18 other cell types or tissues"/>
</dbReference>
<dbReference type="GO" id="GO:0062023">
    <property type="term" value="C:collagen-containing extracellular matrix"/>
    <property type="evidence" value="ECO:0000250"/>
    <property type="project" value="UniProtKB"/>
</dbReference>
<dbReference type="GO" id="GO:0071953">
    <property type="term" value="C:elastic fiber"/>
    <property type="evidence" value="ECO:0000266"/>
    <property type="project" value="RGD"/>
</dbReference>
<dbReference type="GO" id="GO:0005615">
    <property type="term" value="C:extracellular space"/>
    <property type="evidence" value="ECO:0000314"/>
    <property type="project" value="RGD"/>
</dbReference>
<dbReference type="GO" id="GO:0005509">
    <property type="term" value="F:calcium ion binding"/>
    <property type="evidence" value="ECO:0007669"/>
    <property type="project" value="InterPro"/>
</dbReference>
<dbReference type="GO" id="GO:0005178">
    <property type="term" value="F:integrin binding"/>
    <property type="evidence" value="ECO:0000250"/>
    <property type="project" value="UniProtKB"/>
</dbReference>
<dbReference type="GO" id="GO:0042803">
    <property type="term" value="F:protein homodimerization activity"/>
    <property type="evidence" value="ECO:0000250"/>
    <property type="project" value="UniProtKB"/>
</dbReference>
<dbReference type="GO" id="GO:0007155">
    <property type="term" value="P:cell adhesion"/>
    <property type="evidence" value="ECO:0007669"/>
    <property type="project" value="UniProtKB-KW"/>
</dbReference>
<dbReference type="GO" id="GO:0048251">
    <property type="term" value="P:elastic fiber assembly"/>
    <property type="evidence" value="ECO:0000250"/>
    <property type="project" value="UniProtKB"/>
</dbReference>
<dbReference type="GO" id="GO:0030198">
    <property type="term" value="P:extracellular matrix organization"/>
    <property type="evidence" value="ECO:0000266"/>
    <property type="project" value="RGD"/>
</dbReference>
<dbReference type="GO" id="GO:0098867">
    <property type="term" value="P:intramembranous bone growth"/>
    <property type="evidence" value="ECO:0000266"/>
    <property type="project" value="RGD"/>
</dbReference>
<dbReference type="GO" id="GO:0016525">
    <property type="term" value="P:negative regulation of angiogenesis"/>
    <property type="evidence" value="ECO:0000266"/>
    <property type="project" value="RGD"/>
</dbReference>
<dbReference type="GO" id="GO:0000122">
    <property type="term" value="P:negative regulation of transcription by RNA polymerase II"/>
    <property type="evidence" value="ECO:0000266"/>
    <property type="project" value="RGD"/>
</dbReference>
<dbReference type="GO" id="GO:0033690">
    <property type="term" value="P:positive regulation of osteoblast proliferation"/>
    <property type="evidence" value="ECO:0000266"/>
    <property type="project" value="RGD"/>
</dbReference>
<dbReference type="GO" id="GO:0045944">
    <property type="term" value="P:positive regulation of transcription by RNA polymerase II"/>
    <property type="evidence" value="ECO:0000266"/>
    <property type="project" value="RGD"/>
</dbReference>
<dbReference type="GO" id="GO:0034394">
    <property type="term" value="P:protein localization to cell surface"/>
    <property type="evidence" value="ECO:0000266"/>
    <property type="project" value="RGD"/>
</dbReference>
<dbReference type="GO" id="GO:0001558">
    <property type="term" value="P:regulation of cell growth"/>
    <property type="evidence" value="ECO:0000270"/>
    <property type="project" value="RGD"/>
</dbReference>
<dbReference type="GO" id="GO:2000121">
    <property type="term" value="P:regulation of removal of superoxide radicals"/>
    <property type="evidence" value="ECO:0000266"/>
    <property type="project" value="RGD"/>
</dbReference>
<dbReference type="GO" id="GO:0046903">
    <property type="term" value="P:secretion"/>
    <property type="evidence" value="ECO:0000266"/>
    <property type="project" value="RGD"/>
</dbReference>
<dbReference type="CDD" id="cd00054">
    <property type="entry name" value="EGF_CA"/>
    <property type="match status" value="1"/>
</dbReference>
<dbReference type="FunFam" id="2.10.25.10:FF:000091">
    <property type="entry name" value="Fibulin 5"/>
    <property type="match status" value="1"/>
</dbReference>
<dbReference type="FunFam" id="2.10.25.10:FF:000487">
    <property type="entry name" value="Fibulin 5"/>
    <property type="match status" value="1"/>
</dbReference>
<dbReference type="FunFam" id="2.10.25.10:FF:000190">
    <property type="entry name" value="fibulin-5 isoform X2"/>
    <property type="match status" value="1"/>
</dbReference>
<dbReference type="FunFam" id="2.10.25.10:FF:000240">
    <property type="entry name" value="Vitamin K-dependent protein S"/>
    <property type="match status" value="1"/>
</dbReference>
<dbReference type="Gene3D" id="2.10.25.10">
    <property type="entry name" value="Laminin"/>
    <property type="match status" value="6"/>
</dbReference>
<dbReference type="InterPro" id="IPR026823">
    <property type="entry name" value="cEGF"/>
</dbReference>
<dbReference type="InterPro" id="IPR001881">
    <property type="entry name" value="EGF-like_Ca-bd_dom"/>
</dbReference>
<dbReference type="InterPro" id="IPR000742">
    <property type="entry name" value="EGF-like_dom"/>
</dbReference>
<dbReference type="InterPro" id="IPR000152">
    <property type="entry name" value="EGF-type_Asp/Asn_hydroxyl_site"/>
</dbReference>
<dbReference type="InterPro" id="IPR018097">
    <property type="entry name" value="EGF_Ca-bd_CS"/>
</dbReference>
<dbReference type="InterPro" id="IPR055088">
    <property type="entry name" value="Fibulin_C"/>
</dbReference>
<dbReference type="InterPro" id="IPR009030">
    <property type="entry name" value="Growth_fac_rcpt_cys_sf"/>
</dbReference>
<dbReference type="InterPro" id="IPR052235">
    <property type="entry name" value="Nephronectin_domain"/>
</dbReference>
<dbReference type="InterPro" id="IPR049883">
    <property type="entry name" value="NOTCH1_EGF-like"/>
</dbReference>
<dbReference type="PANTHER" id="PTHR24050:SF27">
    <property type="entry name" value="FIBRILLIN-1"/>
    <property type="match status" value="1"/>
</dbReference>
<dbReference type="PANTHER" id="PTHR24050">
    <property type="entry name" value="PA14 DOMAIN-CONTAINING PROTEIN"/>
    <property type="match status" value="1"/>
</dbReference>
<dbReference type="Pfam" id="PF12662">
    <property type="entry name" value="cEGF"/>
    <property type="match status" value="3"/>
</dbReference>
<dbReference type="Pfam" id="PF07645">
    <property type="entry name" value="EGF_CA"/>
    <property type="match status" value="2"/>
</dbReference>
<dbReference type="Pfam" id="PF22914">
    <property type="entry name" value="Fibulin_C"/>
    <property type="match status" value="1"/>
</dbReference>
<dbReference type="SMART" id="SM00181">
    <property type="entry name" value="EGF"/>
    <property type="match status" value="5"/>
</dbReference>
<dbReference type="SMART" id="SM00179">
    <property type="entry name" value="EGF_CA"/>
    <property type="match status" value="6"/>
</dbReference>
<dbReference type="SUPFAM" id="SSF57196">
    <property type="entry name" value="EGF/Laminin"/>
    <property type="match status" value="2"/>
</dbReference>
<dbReference type="SUPFAM" id="SSF57184">
    <property type="entry name" value="Growth factor receptor domain"/>
    <property type="match status" value="1"/>
</dbReference>
<dbReference type="PROSITE" id="PS00010">
    <property type="entry name" value="ASX_HYDROXYL"/>
    <property type="match status" value="4"/>
</dbReference>
<dbReference type="PROSITE" id="PS01186">
    <property type="entry name" value="EGF_2"/>
    <property type="match status" value="4"/>
</dbReference>
<dbReference type="PROSITE" id="PS50026">
    <property type="entry name" value="EGF_3"/>
    <property type="match status" value="5"/>
</dbReference>
<dbReference type="PROSITE" id="PS01187">
    <property type="entry name" value="EGF_CA"/>
    <property type="match status" value="6"/>
</dbReference>
<evidence type="ECO:0000250" key="1">
    <source>
        <dbReference type="UniProtKB" id="Q9UBX5"/>
    </source>
</evidence>
<evidence type="ECO:0000250" key="2">
    <source>
        <dbReference type="UniProtKB" id="Q9WVH9"/>
    </source>
</evidence>
<evidence type="ECO:0000255" key="3"/>
<evidence type="ECO:0000255" key="4">
    <source>
        <dbReference type="PROSITE-ProRule" id="PRU00076"/>
    </source>
</evidence>
<evidence type="ECO:0000305" key="5"/>
<reference key="1">
    <citation type="journal article" date="1999" name="J. Biol. Chem.">
        <title>DANCE, a novel secreted RGD protein expressed in developing, atherosclerotic, and balloon-injured arteries.</title>
        <authorList>
            <person name="Nakamura T."/>
            <person name="Ruiz-Lozano P."/>
            <person name="Lindner V."/>
            <person name="Yabe D."/>
            <person name="Taniwaki M."/>
            <person name="Furukawa Y."/>
            <person name="Kobuke K."/>
            <person name="Tashiro K."/>
            <person name="Lu Z."/>
            <person name="Andon N.L."/>
            <person name="Schaub R."/>
            <person name="Matsumori A."/>
            <person name="Sasayama S."/>
            <person name="Chien K.R."/>
            <person name="Honjo T."/>
        </authorList>
    </citation>
    <scope>NUCLEOTIDE SEQUENCE [MRNA]</scope>
</reference>
<reference key="2">
    <citation type="journal article" date="1999" name="Circ. Res.">
        <title>EVEC, a novel epidermal growth factor-like repeat-containing protein upregulated in embryonic and diseased adult vasculature.</title>
        <authorList>
            <person name="Kowal R.C."/>
            <person name="Richardson J.A."/>
            <person name="Miano J.M."/>
            <person name="Olson E.N."/>
        </authorList>
    </citation>
    <scope>NUCLEOTIDE SEQUENCE [MRNA]</scope>
</reference>
<reference key="3">
    <citation type="journal article" date="2004" name="Genome Res.">
        <title>The status, quality, and expansion of the NIH full-length cDNA project: the Mammalian Gene Collection (MGC).</title>
        <authorList>
            <consortium name="The MGC Project Team"/>
        </authorList>
    </citation>
    <scope>NUCLEOTIDE SEQUENCE [LARGE SCALE MRNA]</scope>
    <source>
        <tissue>Lung</tissue>
    </source>
</reference>
<organism>
    <name type="scientific">Rattus norvegicus</name>
    <name type="common">Rat</name>
    <dbReference type="NCBI Taxonomy" id="10116"/>
    <lineage>
        <taxon>Eukaryota</taxon>
        <taxon>Metazoa</taxon>
        <taxon>Chordata</taxon>
        <taxon>Craniata</taxon>
        <taxon>Vertebrata</taxon>
        <taxon>Euteleostomi</taxon>
        <taxon>Mammalia</taxon>
        <taxon>Eutheria</taxon>
        <taxon>Euarchontoglires</taxon>
        <taxon>Glires</taxon>
        <taxon>Rodentia</taxon>
        <taxon>Myomorpha</taxon>
        <taxon>Muroidea</taxon>
        <taxon>Muridae</taxon>
        <taxon>Murinae</taxon>
        <taxon>Rattus</taxon>
    </lineage>
</organism>
<keyword id="KW-0106">Calcium</keyword>
<keyword id="KW-0130">Cell adhesion</keyword>
<keyword id="KW-1015">Disulfide bond</keyword>
<keyword id="KW-0245">EGF-like domain</keyword>
<keyword id="KW-0272">Extracellular matrix</keyword>
<keyword id="KW-0325">Glycoprotein</keyword>
<keyword id="KW-1185">Reference proteome</keyword>
<keyword id="KW-0677">Repeat</keyword>
<keyword id="KW-0964">Secreted</keyword>
<keyword id="KW-0732">Signal</keyword>
<feature type="signal peptide" evidence="3">
    <location>
        <begin position="1"/>
        <end position="23"/>
    </location>
</feature>
<feature type="chain" id="PRO_0000007579" description="Fibulin-5">
    <location>
        <begin position="24"/>
        <end position="448"/>
    </location>
</feature>
<feature type="domain" description="EGF-like 1; calcium-binding" evidence="4">
    <location>
        <begin position="42"/>
        <end position="82"/>
    </location>
</feature>
<feature type="domain" description="EGF-like 2; calcium-binding" evidence="4">
    <location>
        <begin position="127"/>
        <end position="167"/>
    </location>
</feature>
<feature type="domain" description="EGF-like 3; calcium-binding" evidence="4">
    <location>
        <begin position="168"/>
        <end position="206"/>
    </location>
</feature>
<feature type="domain" description="EGF-like 4; calcium-binding" evidence="4">
    <location>
        <begin position="207"/>
        <end position="246"/>
    </location>
</feature>
<feature type="domain" description="EGF-like 5; calcium-binding" evidence="4">
    <location>
        <begin position="247"/>
        <end position="287"/>
    </location>
</feature>
<feature type="domain" description="EGF-like 6; calcium-binding" evidence="4">
    <location>
        <begin position="288"/>
        <end position="333"/>
    </location>
</feature>
<feature type="region of interest" description="Interaction with LOXL1" evidence="2">
    <location>
        <begin position="245"/>
        <end position="448"/>
    </location>
</feature>
<feature type="short sequence motif" description="Cell attachment site" evidence="3">
    <location>
        <begin position="54"/>
        <end position="56"/>
    </location>
</feature>
<feature type="glycosylation site" description="N-linked (GlcNAc...) asparagine" evidence="3">
    <location>
        <position position="283"/>
    </location>
</feature>
<feature type="glycosylation site" description="N-linked (GlcNAc...) asparagine" evidence="3">
    <location>
        <position position="296"/>
    </location>
</feature>
<feature type="disulfide bond" evidence="4">
    <location>
        <begin position="46"/>
        <end position="59"/>
    </location>
</feature>
<feature type="disulfide bond" evidence="4">
    <location>
        <begin position="53"/>
        <end position="68"/>
    </location>
</feature>
<feature type="disulfide bond" evidence="4">
    <location>
        <begin position="131"/>
        <end position="144"/>
    </location>
</feature>
<feature type="disulfide bond" evidence="4">
    <location>
        <begin position="138"/>
        <end position="153"/>
    </location>
</feature>
<feature type="disulfide bond" evidence="4">
    <location>
        <begin position="155"/>
        <end position="166"/>
    </location>
</feature>
<feature type="disulfide bond" evidence="4">
    <location>
        <begin position="172"/>
        <end position="181"/>
    </location>
</feature>
<feature type="disulfide bond" evidence="4">
    <location>
        <begin position="177"/>
        <end position="190"/>
    </location>
</feature>
<feature type="disulfide bond" evidence="4">
    <location>
        <begin position="192"/>
        <end position="205"/>
    </location>
</feature>
<feature type="disulfide bond" evidence="4">
    <location>
        <begin position="211"/>
        <end position="221"/>
    </location>
</feature>
<feature type="disulfide bond" evidence="4">
    <location>
        <begin position="217"/>
        <end position="230"/>
    </location>
</feature>
<feature type="disulfide bond" evidence="4">
    <location>
        <begin position="232"/>
        <end position="245"/>
    </location>
</feature>
<feature type="disulfide bond" evidence="4">
    <location>
        <begin position="251"/>
        <end position="262"/>
    </location>
</feature>
<feature type="disulfide bond" evidence="4">
    <location>
        <begin position="258"/>
        <end position="271"/>
    </location>
</feature>
<feature type="disulfide bond" evidence="4">
    <location>
        <begin position="273"/>
        <end position="286"/>
    </location>
</feature>
<feature type="disulfide bond" evidence="4">
    <location>
        <begin position="292"/>
        <end position="305"/>
    </location>
</feature>
<feature type="disulfide bond" evidence="4">
    <location>
        <begin position="299"/>
        <end position="314"/>
    </location>
</feature>
<feature type="disulfide bond" evidence="4">
    <location>
        <begin position="320"/>
        <end position="332"/>
    </location>
</feature>
<feature type="sequence conflict" description="In Ref. 2; AAD25101." evidence="5" ref="2">
    <original>L</original>
    <variation>P</variation>
    <location>
        <position position="238"/>
    </location>
</feature>
<proteinExistence type="evidence at transcript level"/>
<sequence length="448" mass="50160">MPGLKRILTVTILALWLPHPGNAQQQCTNGFDLDRQTGQCLDIDECRTIPEACRGDMMCVNQNGGYLCIPRTNPVYRGPYSNPYSTSYSGPYPAAAPPVPASNYPTISRPLVCRFGYQMDEGNQCVDVDECATDSHQCNPTQICINTEGGYTCSCTDGYWLLEGQCLDIDECRYGYCQQLCANVPGSYSCTCNPGFTLNDDGRSCQDVNECETENPCVQTCVNTYGSFICRCDPGYELEEDGIHCSDMDECSFSEFLCQHECVNQPGSYFCSCPPGYVLLEDNRSCQDINECEHRNHTCTPLQTCYNLQGGFKCIDPIVCEEPYLLIGDNRCMCPAENTGCRDQPFTILFRDMDVVSGRSVPADIFQMQATTRYPGAYYIFQIKSGNEGREFYMRQTGPISATLVMTRPIKGPRDIQLDLEMITVNTVINFRGSSVIRLRIYVSQYPF</sequence>
<name>FBLN5_RAT</name>
<comment type="function">
    <text evidence="1 2">Essential for elastic fiber formation, is involved in the assembly of continuous elastin (ELN) polymer and promotes the interaction of microfibrils and ELN. Stabilizes and organizes elastic fibers in the skin, lung and vasculature. Promotes adhesion of endothelial cells through interaction of integrins and the RGD motif. Vascular ligand for integrin receptors which may play a role in vascular development and remodeling. May act as an adapter that mediates the interaction between FBN1 and ELN.</text>
</comment>
<comment type="subunit">
    <text evidence="1 2">Homodimer. Monomer, homodimerizes in presence of Ca(2+). Interacts with ELN. Interacts (via N-terminus) with the integrins ITGAV/ITGB3, ITGAV/ITGB5 and ITGA9/ITGB1. Interacts with FBN1 (via N-terminal domain). Forms a ternary complex with ELN and FBN1. Interacts with EFEMP2 with moderate affinity (By similarity). Interacts with LOXL1 (By similarity).</text>
</comment>
<comment type="subcellular location">
    <subcellularLocation>
        <location evidence="1">Secreted</location>
    </subcellularLocation>
    <subcellularLocation>
        <location evidence="1">Secreted</location>
        <location evidence="1">Extracellular space</location>
        <location evidence="1">Extracellular matrix</location>
    </subcellularLocation>
    <text evidence="1">co-localizes with ELN in elastic fibers.</text>
</comment>
<comment type="PTM">
    <text evidence="1">N-glycosylated.</text>
</comment>
<comment type="similarity">
    <text evidence="5">Belongs to the fibulin family.</text>
</comment>